<name>AROC_PARL1</name>
<reference key="1">
    <citation type="journal article" date="2011" name="Stand. Genomic Sci.">
        <title>Complete genome sequence of Parvibaculum lavamentivorans type strain (DS-1(T)).</title>
        <authorList>
            <person name="Schleheck D."/>
            <person name="Weiss M."/>
            <person name="Pitluck S."/>
            <person name="Bruce D."/>
            <person name="Land M.L."/>
            <person name="Han S."/>
            <person name="Saunders E."/>
            <person name="Tapia R."/>
            <person name="Detter C."/>
            <person name="Brettin T."/>
            <person name="Han J."/>
            <person name="Woyke T."/>
            <person name="Goodwin L."/>
            <person name="Pennacchio L."/>
            <person name="Nolan M."/>
            <person name="Cook A.M."/>
            <person name="Kjelleberg S."/>
            <person name="Thomas T."/>
        </authorList>
    </citation>
    <scope>NUCLEOTIDE SEQUENCE [LARGE SCALE GENOMIC DNA]</scope>
    <source>
        <strain>DS-1 / DSM 13023 / NCIMB 13966</strain>
    </source>
</reference>
<sequence>MSHNTFGHLFRVTTWGESHGPALGCVVDGAPPRLPLKAEDIQQWLDRRKPGQSRFTTQRREPDAVKILSGTFVEDGIEMTTGTPISLMIENVDQRSKDYGDIVEKFRPGHADLTYFLKYGIRDYRGGGRSSARETAARVAAGAVARAMLPEMMIRGALVQMGPHKIDRANWDWNEVGNNPFWCPDAKAAAEWEIYLDSVRKAGSSCGAVIEIVASGVPAGLGSPIYGKLDAELASALMSINAVKGVEIGDGFGAAALSGEENADEMQSGPHGIEFSSNHAGGVLGGISTGQDVVARFAVKPTSSILSPRKTVTKGGDDTEIVTKGRHDPCVGIRAVPVGEAMMACVLADQLLRHRAQMGGSGRNE</sequence>
<protein>
    <recommendedName>
        <fullName evidence="1">Chorismate synthase</fullName>
        <shortName evidence="1">CS</shortName>
        <ecNumber evidence="1">4.2.3.5</ecNumber>
    </recommendedName>
    <alternativeName>
        <fullName evidence="1">5-enolpyruvylshikimate-3-phosphate phospholyase</fullName>
    </alternativeName>
</protein>
<comment type="function">
    <text evidence="1">Catalyzes the anti-1,4-elimination of the C-3 phosphate and the C-6 proR hydrogen from 5-enolpyruvylshikimate-3-phosphate (EPSP) to yield chorismate, which is the branch point compound that serves as the starting substrate for the three terminal pathways of aromatic amino acid biosynthesis. This reaction introduces a second double bond into the aromatic ring system.</text>
</comment>
<comment type="catalytic activity">
    <reaction evidence="1">
        <text>5-O-(1-carboxyvinyl)-3-phosphoshikimate = chorismate + phosphate</text>
        <dbReference type="Rhea" id="RHEA:21020"/>
        <dbReference type="ChEBI" id="CHEBI:29748"/>
        <dbReference type="ChEBI" id="CHEBI:43474"/>
        <dbReference type="ChEBI" id="CHEBI:57701"/>
        <dbReference type="EC" id="4.2.3.5"/>
    </reaction>
</comment>
<comment type="cofactor">
    <cofactor evidence="1">
        <name>FMNH2</name>
        <dbReference type="ChEBI" id="CHEBI:57618"/>
    </cofactor>
    <text evidence="1">Reduced FMN (FMNH(2)).</text>
</comment>
<comment type="pathway">
    <text evidence="1">Metabolic intermediate biosynthesis; chorismate biosynthesis; chorismate from D-erythrose 4-phosphate and phosphoenolpyruvate: step 7/7.</text>
</comment>
<comment type="subunit">
    <text evidence="1">Homotetramer.</text>
</comment>
<comment type="similarity">
    <text evidence="1">Belongs to the chorismate synthase family.</text>
</comment>
<feature type="chain" id="PRO_1000071972" description="Chorismate synthase">
    <location>
        <begin position="1"/>
        <end position="365"/>
    </location>
</feature>
<feature type="binding site" evidence="1">
    <location>
        <position position="48"/>
    </location>
    <ligand>
        <name>NADP(+)</name>
        <dbReference type="ChEBI" id="CHEBI:58349"/>
    </ligand>
</feature>
<feature type="binding site" evidence="1">
    <location>
        <position position="54"/>
    </location>
    <ligand>
        <name>NADP(+)</name>
        <dbReference type="ChEBI" id="CHEBI:58349"/>
    </ligand>
</feature>
<feature type="binding site" evidence="1">
    <location>
        <begin position="129"/>
        <end position="131"/>
    </location>
    <ligand>
        <name>FMN</name>
        <dbReference type="ChEBI" id="CHEBI:58210"/>
    </ligand>
</feature>
<feature type="binding site" evidence="1">
    <location>
        <begin position="241"/>
        <end position="242"/>
    </location>
    <ligand>
        <name>FMN</name>
        <dbReference type="ChEBI" id="CHEBI:58210"/>
    </ligand>
</feature>
<feature type="binding site" evidence="1">
    <location>
        <position position="285"/>
    </location>
    <ligand>
        <name>FMN</name>
        <dbReference type="ChEBI" id="CHEBI:58210"/>
    </ligand>
</feature>
<feature type="binding site" evidence="1">
    <location>
        <begin position="300"/>
        <end position="304"/>
    </location>
    <ligand>
        <name>FMN</name>
        <dbReference type="ChEBI" id="CHEBI:58210"/>
    </ligand>
</feature>
<feature type="binding site" evidence="1">
    <location>
        <position position="326"/>
    </location>
    <ligand>
        <name>FMN</name>
        <dbReference type="ChEBI" id="CHEBI:58210"/>
    </ligand>
</feature>
<dbReference type="EC" id="4.2.3.5" evidence="1"/>
<dbReference type="EMBL" id="CP000774">
    <property type="protein sequence ID" value="ABS62408.1"/>
    <property type="molecule type" value="Genomic_DNA"/>
</dbReference>
<dbReference type="RefSeq" id="WP_012109658.1">
    <property type="nucleotide sequence ID" value="NC_009719.1"/>
</dbReference>
<dbReference type="SMR" id="A7HR75"/>
<dbReference type="STRING" id="402881.Plav_0785"/>
<dbReference type="KEGG" id="pla:Plav_0785"/>
<dbReference type="eggNOG" id="COG0082">
    <property type="taxonomic scope" value="Bacteria"/>
</dbReference>
<dbReference type="HOGENOM" id="CLU_034547_0_0_5"/>
<dbReference type="OrthoDB" id="9771806at2"/>
<dbReference type="UniPathway" id="UPA00053">
    <property type="reaction ID" value="UER00090"/>
</dbReference>
<dbReference type="Proteomes" id="UP000006377">
    <property type="component" value="Chromosome"/>
</dbReference>
<dbReference type="GO" id="GO:0005829">
    <property type="term" value="C:cytosol"/>
    <property type="evidence" value="ECO:0007669"/>
    <property type="project" value="TreeGrafter"/>
</dbReference>
<dbReference type="GO" id="GO:0004107">
    <property type="term" value="F:chorismate synthase activity"/>
    <property type="evidence" value="ECO:0007669"/>
    <property type="project" value="UniProtKB-UniRule"/>
</dbReference>
<dbReference type="GO" id="GO:0010181">
    <property type="term" value="F:FMN binding"/>
    <property type="evidence" value="ECO:0007669"/>
    <property type="project" value="TreeGrafter"/>
</dbReference>
<dbReference type="GO" id="GO:0008652">
    <property type="term" value="P:amino acid biosynthetic process"/>
    <property type="evidence" value="ECO:0007669"/>
    <property type="project" value="UniProtKB-KW"/>
</dbReference>
<dbReference type="GO" id="GO:0009073">
    <property type="term" value="P:aromatic amino acid family biosynthetic process"/>
    <property type="evidence" value="ECO:0007669"/>
    <property type="project" value="UniProtKB-KW"/>
</dbReference>
<dbReference type="GO" id="GO:0009423">
    <property type="term" value="P:chorismate biosynthetic process"/>
    <property type="evidence" value="ECO:0007669"/>
    <property type="project" value="UniProtKB-UniRule"/>
</dbReference>
<dbReference type="CDD" id="cd07304">
    <property type="entry name" value="Chorismate_synthase"/>
    <property type="match status" value="1"/>
</dbReference>
<dbReference type="Gene3D" id="3.60.150.10">
    <property type="entry name" value="Chorismate synthase AroC"/>
    <property type="match status" value="1"/>
</dbReference>
<dbReference type="HAMAP" id="MF_00300">
    <property type="entry name" value="Chorismate_synth"/>
    <property type="match status" value="1"/>
</dbReference>
<dbReference type="InterPro" id="IPR000453">
    <property type="entry name" value="Chorismate_synth"/>
</dbReference>
<dbReference type="InterPro" id="IPR035904">
    <property type="entry name" value="Chorismate_synth_AroC_sf"/>
</dbReference>
<dbReference type="InterPro" id="IPR020541">
    <property type="entry name" value="Chorismate_synthase_CS"/>
</dbReference>
<dbReference type="NCBIfam" id="TIGR00033">
    <property type="entry name" value="aroC"/>
    <property type="match status" value="1"/>
</dbReference>
<dbReference type="NCBIfam" id="NF003793">
    <property type="entry name" value="PRK05382.1"/>
    <property type="match status" value="1"/>
</dbReference>
<dbReference type="PANTHER" id="PTHR21085">
    <property type="entry name" value="CHORISMATE SYNTHASE"/>
    <property type="match status" value="1"/>
</dbReference>
<dbReference type="PANTHER" id="PTHR21085:SF0">
    <property type="entry name" value="CHORISMATE SYNTHASE"/>
    <property type="match status" value="1"/>
</dbReference>
<dbReference type="Pfam" id="PF01264">
    <property type="entry name" value="Chorismate_synt"/>
    <property type="match status" value="1"/>
</dbReference>
<dbReference type="PIRSF" id="PIRSF001456">
    <property type="entry name" value="Chorismate_synth"/>
    <property type="match status" value="1"/>
</dbReference>
<dbReference type="SUPFAM" id="SSF103263">
    <property type="entry name" value="Chorismate synthase, AroC"/>
    <property type="match status" value="1"/>
</dbReference>
<dbReference type="PROSITE" id="PS00787">
    <property type="entry name" value="CHORISMATE_SYNTHASE_1"/>
    <property type="match status" value="1"/>
</dbReference>
<dbReference type="PROSITE" id="PS00788">
    <property type="entry name" value="CHORISMATE_SYNTHASE_2"/>
    <property type="match status" value="1"/>
</dbReference>
<dbReference type="PROSITE" id="PS00789">
    <property type="entry name" value="CHORISMATE_SYNTHASE_3"/>
    <property type="match status" value="1"/>
</dbReference>
<organism>
    <name type="scientific">Parvibaculum lavamentivorans (strain DS-1 / DSM 13023 / NCIMB 13966)</name>
    <dbReference type="NCBI Taxonomy" id="402881"/>
    <lineage>
        <taxon>Bacteria</taxon>
        <taxon>Pseudomonadati</taxon>
        <taxon>Pseudomonadota</taxon>
        <taxon>Alphaproteobacteria</taxon>
        <taxon>Hyphomicrobiales</taxon>
        <taxon>Parvibaculaceae</taxon>
        <taxon>Parvibaculum</taxon>
    </lineage>
</organism>
<gene>
    <name evidence="1" type="primary">aroC</name>
    <name type="ordered locus">Plav_0785</name>
</gene>
<accession>A7HR75</accession>
<proteinExistence type="inferred from homology"/>
<evidence type="ECO:0000255" key="1">
    <source>
        <dbReference type="HAMAP-Rule" id="MF_00300"/>
    </source>
</evidence>
<keyword id="KW-0028">Amino-acid biosynthesis</keyword>
<keyword id="KW-0057">Aromatic amino acid biosynthesis</keyword>
<keyword id="KW-0274">FAD</keyword>
<keyword id="KW-0285">Flavoprotein</keyword>
<keyword id="KW-0288">FMN</keyword>
<keyword id="KW-0456">Lyase</keyword>
<keyword id="KW-0521">NADP</keyword>
<keyword id="KW-1185">Reference proteome</keyword>